<sequence>MGLIDVLKSFKSPSGREIRILLLGLDNAGKTTILKQLSSEDVQHVTPTKGFNVKTVAAMGDIRLNVWDIGGQRSIRPYWSNYYENIDTLIFVIDSNDKKRFDEMNIELGELLDEEKLRKVPVLIFANKQDLVTAASSEEITRKLNLDLLRDRTWHIQACSALKNEGINDGITWVASNLKPASKK</sequence>
<gene>
    <name type="primary">arl-3</name>
    <name type="ORF">F19H8.3</name>
</gene>
<keyword id="KW-0931">ER-Golgi transport</keyword>
<keyword id="KW-0333">Golgi apparatus</keyword>
<keyword id="KW-0342">GTP-binding</keyword>
<keyword id="KW-0449">Lipoprotein</keyword>
<keyword id="KW-0519">Myristate</keyword>
<keyword id="KW-0547">Nucleotide-binding</keyword>
<keyword id="KW-0653">Protein transport</keyword>
<keyword id="KW-1185">Reference proteome</keyword>
<keyword id="KW-0813">Transport</keyword>
<evidence type="ECO:0000250" key="1"/>
<evidence type="ECO:0000255" key="2"/>
<evidence type="ECO:0000305" key="3"/>
<protein>
    <recommendedName>
        <fullName>ADP-ribosylation factor-like protein 3</fullName>
    </recommendedName>
</protein>
<proteinExistence type="evidence at protein level"/>
<comment type="function">
    <text evidence="1">GTP-binding protein that may be involved in protein trafficking; may modulate vesicle budding and uncoating within the Golgi apparatus.</text>
</comment>
<comment type="interaction">
    <interactant intactId="EBI-325438">
        <id>O45379</id>
    </interactant>
    <interactant intactId="EBI-316181">
        <id>Q18268</id>
        <label>pdl-1</label>
    </interactant>
    <organismsDiffer>false</organismsDiffer>
    <experiments>4</experiments>
</comment>
<comment type="interaction">
    <interactant intactId="EBI-325438">
        <id>O45379</id>
    </interactant>
    <interactant intactId="EBI-325431">
        <id>Q10658</id>
        <label>unc-119</label>
    </interactant>
    <organismsDiffer>false</organismsDiffer>
    <experiments>5</experiments>
</comment>
<comment type="subcellular location">
    <subcellularLocation>
        <location evidence="1">Golgi apparatus</location>
    </subcellularLocation>
</comment>
<comment type="similarity">
    <text evidence="3">Belongs to the small GTPase superfamily. Arf family.</text>
</comment>
<feature type="initiator methionine" description="Removed" evidence="2">
    <location>
        <position position="1"/>
    </location>
</feature>
<feature type="chain" id="PRO_0000207407" description="ADP-ribosylation factor-like protein 3">
    <location>
        <begin position="2"/>
        <end position="184"/>
    </location>
</feature>
<feature type="binding site" evidence="1">
    <location>
        <begin position="24"/>
        <end position="31"/>
    </location>
    <ligand>
        <name>GTP</name>
        <dbReference type="ChEBI" id="CHEBI:37565"/>
    </ligand>
</feature>
<feature type="binding site" evidence="1">
    <location>
        <begin position="68"/>
        <end position="72"/>
    </location>
    <ligand>
        <name>GTP</name>
        <dbReference type="ChEBI" id="CHEBI:37565"/>
    </ligand>
</feature>
<feature type="binding site" evidence="1">
    <location>
        <begin position="127"/>
        <end position="130"/>
    </location>
    <ligand>
        <name>GTP</name>
        <dbReference type="ChEBI" id="CHEBI:37565"/>
    </ligand>
</feature>
<feature type="lipid moiety-binding region" description="N-myristoyl glycine" evidence="2">
    <location>
        <position position="2"/>
    </location>
</feature>
<name>ARL3_CAEEL</name>
<dbReference type="EMBL" id="Z93378">
    <property type="protein sequence ID" value="CAB07583.1"/>
    <property type="molecule type" value="Genomic_DNA"/>
</dbReference>
<dbReference type="PIR" id="T21126">
    <property type="entry name" value="T21126"/>
</dbReference>
<dbReference type="RefSeq" id="NP_497037.1">
    <property type="nucleotide sequence ID" value="NM_064636.4"/>
</dbReference>
<dbReference type="SMR" id="O45379"/>
<dbReference type="BioGRID" id="40402">
    <property type="interactions" value="8"/>
</dbReference>
<dbReference type="DIP" id="DIP-24793N"/>
<dbReference type="FunCoup" id="O45379">
    <property type="interactions" value="448"/>
</dbReference>
<dbReference type="IntAct" id="O45379">
    <property type="interactions" value="3"/>
</dbReference>
<dbReference type="STRING" id="6239.F19H8.3.1"/>
<dbReference type="PaxDb" id="6239-F19H8.3"/>
<dbReference type="PeptideAtlas" id="O45379"/>
<dbReference type="EnsemblMetazoa" id="F19H8.3.1">
    <property type="protein sequence ID" value="F19H8.3.1"/>
    <property type="gene ID" value="WBGene00000188"/>
</dbReference>
<dbReference type="GeneID" id="175121"/>
<dbReference type="KEGG" id="cel:CELE_F19H8.3"/>
<dbReference type="UCSC" id="F19H8.3">
    <property type="organism name" value="c. elegans"/>
</dbReference>
<dbReference type="AGR" id="WB:WBGene00000188"/>
<dbReference type="CTD" id="175121"/>
<dbReference type="WormBase" id="F19H8.3">
    <property type="protein sequence ID" value="CE15872"/>
    <property type="gene ID" value="WBGene00000188"/>
    <property type="gene designation" value="arl-3"/>
</dbReference>
<dbReference type="eggNOG" id="KOG0074">
    <property type="taxonomic scope" value="Eukaryota"/>
</dbReference>
<dbReference type="GeneTree" id="ENSGT00940000173608"/>
<dbReference type="HOGENOM" id="CLU_040729_12_0_1"/>
<dbReference type="InParanoid" id="O45379"/>
<dbReference type="OMA" id="EGMEWVC"/>
<dbReference type="PhylomeDB" id="O45379"/>
<dbReference type="Reactome" id="R-CEL-5624138">
    <property type="pathway name" value="Trafficking of myristoylated proteins to the cilium"/>
</dbReference>
<dbReference type="PRO" id="PR:O45379"/>
<dbReference type="Proteomes" id="UP000001940">
    <property type="component" value="Chromosome II"/>
</dbReference>
<dbReference type="Bgee" id="WBGene00000188">
    <property type="expression patterns" value="Expressed in pharyngeal muscle cell (C elegans) and 3 other cell types or tissues"/>
</dbReference>
<dbReference type="GO" id="GO:0005737">
    <property type="term" value="C:cytoplasm"/>
    <property type="evidence" value="ECO:0000318"/>
    <property type="project" value="GO_Central"/>
</dbReference>
<dbReference type="GO" id="GO:0005794">
    <property type="term" value="C:Golgi apparatus"/>
    <property type="evidence" value="ECO:0007669"/>
    <property type="project" value="UniProtKB-SubCell"/>
</dbReference>
<dbReference type="GO" id="GO:0015630">
    <property type="term" value="C:microtubule cytoskeleton"/>
    <property type="evidence" value="ECO:0000318"/>
    <property type="project" value="GO_Central"/>
</dbReference>
<dbReference type="GO" id="GO:0005525">
    <property type="term" value="F:GTP binding"/>
    <property type="evidence" value="ECO:0000318"/>
    <property type="project" value="GO_Central"/>
</dbReference>
<dbReference type="GO" id="GO:0003924">
    <property type="term" value="F:GTPase activity"/>
    <property type="evidence" value="ECO:0007669"/>
    <property type="project" value="InterPro"/>
</dbReference>
<dbReference type="GO" id="GO:0060271">
    <property type="term" value="P:cilium assembly"/>
    <property type="evidence" value="ECO:0000318"/>
    <property type="project" value="GO_Central"/>
</dbReference>
<dbReference type="GO" id="GO:0015031">
    <property type="term" value="P:protein transport"/>
    <property type="evidence" value="ECO:0007669"/>
    <property type="project" value="UniProtKB-KW"/>
</dbReference>
<dbReference type="GO" id="GO:0016192">
    <property type="term" value="P:vesicle-mediated transport"/>
    <property type="evidence" value="ECO:0007669"/>
    <property type="project" value="UniProtKB-KW"/>
</dbReference>
<dbReference type="CDD" id="cd04155">
    <property type="entry name" value="Arl3"/>
    <property type="match status" value="1"/>
</dbReference>
<dbReference type="FunFam" id="3.40.50.300:FF:000281">
    <property type="entry name" value="ADP-ribosylation factor-like protein 3"/>
    <property type="match status" value="1"/>
</dbReference>
<dbReference type="Gene3D" id="3.40.50.300">
    <property type="entry name" value="P-loop containing nucleotide triphosphate hydrolases"/>
    <property type="match status" value="1"/>
</dbReference>
<dbReference type="InterPro" id="IPR044612">
    <property type="entry name" value="ARL2/3"/>
</dbReference>
<dbReference type="InterPro" id="IPR027417">
    <property type="entry name" value="P-loop_NTPase"/>
</dbReference>
<dbReference type="InterPro" id="IPR005225">
    <property type="entry name" value="Small_GTP-bd"/>
</dbReference>
<dbReference type="InterPro" id="IPR006689">
    <property type="entry name" value="Small_GTPase_ARF/SAR"/>
</dbReference>
<dbReference type="NCBIfam" id="TIGR00231">
    <property type="entry name" value="small_GTP"/>
    <property type="match status" value="1"/>
</dbReference>
<dbReference type="PANTHER" id="PTHR45697">
    <property type="entry name" value="ADP-RIBOSYLATION FACTOR-LIKE PROTEIN 2-RELATED"/>
    <property type="match status" value="1"/>
</dbReference>
<dbReference type="Pfam" id="PF00025">
    <property type="entry name" value="Arf"/>
    <property type="match status" value="1"/>
</dbReference>
<dbReference type="PRINTS" id="PR00328">
    <property type="entry name" value="SAR1GTPBP"/>
</dbReference>
<dbReference type="SMART" id="SM00177">
    <property type="entry name" value="ARF"/>
    <property type="match status" value="1"/>
</dbReference>
<dbReference type="SMART" id="SM00175">
    <property type="entry name" value="RAB"/>
    <property type="match status" value="1"/>
</dbReference>
<dbReference type="SMART" id="SM00178">
    <property type="entry name" value="SAR"/>
    <property type="match status" value="1"/>
</dbReference>
<dbReference type="SUPFAM" id="SSF52540">
    <property type="entry name" value="P-loop containing nucleoside triphosphate hydrolases"/>
    <property type="match status" value="1"/>
</dbReference>
<dbReference type="PROSITE" id="PS51417">
    <property type="entry name" value="ARF"/>
    <property type="match status" value="1"/>
</dbReference>
<organism>
    <name type="scientific">Caenorhabditis elegans</name>
    <dbReference type="NCBI Taxonomy" id="6239"/>
    <lineage>
        <taxon>Eukaryota</taxon>
        <taxon>Metazoa</taxon>
        <taxon>Ecdysozoa</taxon>
        <taxon>Nematoda</taxon>
        <taxon>Chromadorea</taxon>
        <taxon>Rhabditida</taxon>
        <taxon>Rhabditina</taxon>
        <taxon>Rhabditomorpha</taxon>
        <taxon>Rhabditoidea</taxon>
        <taxon>Rhabditidae</taxon>
        <taxon>Peloderinae</taxon>
        <taxon>Caenorhabditis</taxon>
    </lineage>
</organism>
<reference key="1">
    <citation type="journal article" date="1998" name="Science">
        <title>Genome sequence of the nematode C. elegans: a platform for investigating biology.</title>
        <authorList>
            <consortium name="The C. elegans sequencing consortium"/>
        </authorList>
    </citation>
    <scope>NUCLEOTIDE SEQUENCE [LARGE SCALE GENOMIC DNA]</scope>
    <source>
        <strain>Bristol N2</strain>
    </source>
</reference>
<accession>O45379</accession>